<protein>
    <recommendedName>
        <fullName>Uncharacterized protein TP_0583</fullName>
    </recommendedName>
</protein>
<proteinExistence type="predicted"/>
<gene>
    <name type="ordered locus">TP_0583</name>
</gene>
<feature type="chain" id="PRO_0000202279" description="Uncharacterized protein TP_0583">
    <location>
        <begin position="1"/>
        <end position="41"/>
    </location>
</feature>
<organism>
    <name type="scientific">Treponema pallidum (strain Nichols)</name>
    <dbReference type="NCBI Taxonomy" id="243276"/>
    <lineage>
        <taxon>Bacteria</taxon>
        <taxon>Pseudomonadati</taxon>
        <taxon>Spirochaetota</taxon>
        <taxon>Spirochaetia</taxon>
        <taxon>Spirochaetales</taxon>
        <taxon>Treponemataceae</taxon>
        <taxon>Treponema</taxon>
    </lineage>
</organism>
<accession>O83592</accession>
<name>Y583_TREPA</name>
<reference key="1">
    <citation type="journal article" date="1998" name="Science">
        <title>Complete genome sequence of Treponema pallidum, the syphilis spirochete.</title>
        <authorList>
            <person name="Fraser C.M."/>
            <person name="Norris S.J."/>
            <person name="Weinstock G.M."/>
            <person name="White O."/>
            <person name="Sutton G.G."/>
            <person name="Dodson R.J."/>
            <person name="Gwinn M.L."/>
            <person name="Hickey E.K."/>
            <person name="Clayton R.A."/>
            <person name="Ketchum K.A."/>
            <person name="Sodergren E."/>
            <person name="Hardham J.M."/>
            <person name="McLeod M.P."/>
            <person name="Salzberg S.L."/>
            <person name="Peterson J.D."/>
            <person name="Khalak H.G."/>
            <person name="Richardson D.L."/>
            <person name="Howell J.K."/>
            <person name="Chidambaram M."/>
            <person name="Utterback T.R."/>
            <person name="McDonald L.A."/>
            <person name="Artiach P."/>
            <person name="Bowman C."/>
            <person name="Cotton M.D."/>
            <person name="Fujii C."/>
            <person name="Garland S.A."/>
            <person name="Hatch B."/>
            <person name="Horst K."/>
            <person name="Roberts K.M."/>
            <person name="Sandusky M."/>
            <person name="Weidman J.F."/>
            <person name="Smith H.O."/>
            <person name="Venter J.C."/>
        </authorList>
    </citation>
    <scope>NUCLEOTIDE SEQUENCE [LARGE SCALE GENOMIC DNA]</scope>
    <source>
        <strain>Nichols</strain>
    </source>
</reference>
<keyword id="KW-1185">Reference proteome</keyword>
<sequence>MRSSIAPTAPAACSSKRWYPSVCEPDVRNQKNWGHPITPCA</sequence>
<dbReference type="EMBL" id="AE000520">
    <property type="protein sequence ID" value="AAC65561.1"/>
    <property type="molecule type" value="Genomic_DNA"/>
</dbReference>
<dbReference type="PIR" id="E71307">
    <property type="entry name" value="E71307"/>
</dbReference>
<dbReference type="IntAct" id="O83592">
    <property type="interactions" value="13"/>
</dbReference>
<dbReference type="EnsemblBacteria" id="AAC65561">
    <property type="protein sequence ID" value="AAC65561"/>
    <property type="gene ID" value="TP_0583"/>
</dbReference>
<dbReference type="KEGG" id="tpa:TP_0583"/>
<dbReference type="HOGENOM" id="CLU_3278193_0_0_12"/>
<dbReference type="Proteomes" id="UP000000811">
    <property type="component" value="Chromosome"/>
</dbReference>